<accession>O13641</accession>
<gene>
    <name type="ORF">pi049</name>
    <name evidence="3" type="ORF">SPBC8D2.16c</name>
</gene>
<reference key="1">
    <citation type="journal article" date="2000" name="Yeast">
        <title>A 38 kb segment containing the cdc2 gene from the left arm of fission yeast chromosome II: sequence analysis and characterization of the genomic DNA and cDNAs encoded on the segment.</title>
        <authorList>
            <person name="Machida M."/>
            <person name="Yamazaki S."/>
            <person name="Kunihiro S."/>
            <person name="Tanaka T."/>
            <person name="Kushida N."/>
            <person name="Jinno K."/>
            <person name="Haikawa Y."/>
            <person name="Yamazaki J."/>
            <person name="Yamamoto S."/>
            <person name="Sekine M."/>
            <person name="Oguchi A."/>
            <person name="Nagai Y."/>
            <person name="Sakai M."/>
            <person name="Aoki K."/>
            <person name="Ogura K."/>
            <person name="Kudoh Y."/>
            <person name="Kikuchi H."/>
            <person name="Zhang M.Q."/>
            <person name="Yanagida M."/>
        </authorList>
    </citation>
    <scope>NUCLEOTIDE SEQUENCE [LARGE SCALE GENOMIC DNA]</scope>
    <source>
        <strain>972 / ATCC 24843</strain>
    </source>
</reference>
<reference key="2">
    <citation type="journal article" date="2002" name="Nature">
        <title>The genome sequence of Schizosaccharomyces pombe.</title>
        <authorList>
            <person name="Wood V."/>
            <person name="Gwilliam R."/>
            <person name="Rajandream M.A."/>
            <person name="Lyne M.H."/>
            <person name="Lyne R."/>
            <person name="Stewart A."/>
            <person name="Sgouros J.G."/>
            <person name="Peat N."/>
            <person name="Hayles J."/>
            <person name="Baker S.G."/>
            <person name="Basham D."/>
            <person name="Bowman S."/>
            <person name="Brooks K."/>
            <person name="Brown D."/>
            <person name="Brown S."/>
            <person name="Chillingworth T."/>
            <person name="Churcher C.M."/>
            <person name="Collins M."/>
            <person name="Connor R."/>
            <person name="Cronin A."/>
            <person name="Davis P."/>
            <person name="Feltwell T."/>
            <person name="Fraser A."/>
            <person name="Gentles S."/>
            <person name="Goble A."/>
            <person name="Hamlin N."/>
            <person name="Harris D.E."/>
            <person name="Hidalgo J."/>
            <person name="Hodgson G."/>
            <person name="Holroyd S."/>
            <person name="Hornsby T."/>
            <person name="Howarth S."/>
            <person name="Huckle E.J."/>
            <person name="Hunt S."/>
            <person name="Jagels K."/>
            <person name="James K.D."/>
            <person name="Jones L."/>
            <person name="Jones M."/>
            <person name="Leather S."/>
            <person name="McDonald S."/>
            <person name="McLean J."/>
            <person name="Mooney P."/>
            <person name="Moule S."/>
            <person name="Mungall K.L."/>
            <person name="Murphy L.D."/>
            <person name="Niblett D."/>
            <person name="Odell C."/>
            <person name="Oliver K."/>
            <person name="O'Neil S."/>
            <person name="Pearson D."/>
            <person name="Quail M.A."/>
            <person name="Rabbinowitsch E."/>
            <person name="Rutherford K.M."/>
            <person name="Rutter S."/>
            <person name="Saunders D."/>
            <person name="Seeger K."/>
            <person name="Sharp S."/>
            <person name="Skelton J."/>
            <person name="Simmonds M.N."/>
            <person name="Squares R."/>
            <person name="Squares S."/>
            <person name="Stevens K."/>
            <person name="Taylor K."/>
            <person name="Taylor R.G."/>
            <person name="Tivey A."/>
            <person name="Walsh S.V."/>
            <person name="Warren T."/>
            <person name="Whitehead S."/>
            <person name="Woodward J.R."/>
            <person name="Volckaert G."/>
            <person name="Aert R."/>
            <person name="Robben J."/>
            <person name="Grymonprez B."/>
            <person name="Weltjens I."/>
            <person name="Vanstreels E."/>
            <person name="Rieger M."/>
            <person name="Schaefer M."/>
            <person name="Mueller-Auer S."/>
            <person name="Gabel C."/>
            <person name="Fuchs M."/>
            <person name="Duesterhoeft A."/>
            <person name="Fritzc C."/>
            <person name="Holzer E."/>
            <person name="Moestl D."/>
            <person name="Hilbert H."/>
            <person name="Borzym K."/>
            <person name="Langer I."/>
            <person name="Beck A."/>
            <person name="Lehrach H."/>
            <person name="Reinhardt R."/>
            <person name="Pohl T.M."/>
            <person name="Eger P."/>
            <person name="Zimmermann W."/>
            <person name="Wedler H."/>
            <person name="Wambutt R."/>
            <person name="Purnelle B."/>
            <person name="Goffeau A."/>
            <person name="Cadieu E."/>
            <person name="Dreano S."/>
            <person name="Gloux S."/>
            <person name="Lelaure V."/>
            <person name="Mottier S."/>
            <person name="Galibert F."/>
            <person name="Aves S.J."/>
            <person name="Xiang Z."/>
            <person name="Hunt C."/>
            <person name="Moore K."/>
            <person name="Hurst S.M."/>
            <person name="Lucas M."/>
            <person name="Rochet M."/>
            <person name="Gaillardin C."/>
            <person name="Tallada V.A."/>
            <person name="Garzon A."/>
            <person name="Thode G."/>
            <person name="Daga R.R."/>
            <person name="Cruzado L."/>
            <person name="Jimenez J."/>
            <person name="Sanchez M."/>
            <person name="del Rey F."/>
            <person name="Benito J."/>
            <person name="Dominguez A."/>
            <person name="Revuelta J.L."/>
            <person name="Moreno S."/>
            <person name="Armstrong J."/>
            <person name="Forsburg S.L."/>
            <person name="Cerutti L."/>
            <person name="Lowe T."/>
            <person name="McCombie W.R."/>
            <person name="Paulsen I."/>
            <person name="Potashkin J."/>
            <person name="Shpakovski G.V."/>
            <person name="Ussery D."/>
            <person name="Barrell B.G."/>
            <person name="Nurse P."/>
        </authorList>
    </citation>
    <scope>NUCLEOTIDE SEQUENCE [LARGE SCALE GENOMIC DNA]</scope>
    <source>
        <strain>972 / ATCC 24843</strain>
    </source>
</reference>
<reference key="3">
    <citation type="journal article" date="2006" name="Nat. Biotechnol.">
        <title>ORFeome cloning and global analysis of protein localization in the fission yeast Schizosaccharomyces pombe.</title>
        <authorList>
            <person name="Matsuyama A."/>
            <person name="Arai R."/>
            <person name="Yashiroda Y."/>
            <person name="Shirai A."/>
            <person name="Kamata A."/>
            <person name="Sekido S."/>
            <person name="Kobayashi Y."/>
            <person name="Hashimoto A."/>
            <person name="Hamamoto M."/>
            <person name="Hiraoka Y."/>
            <person name="Horinouchi S."/>
            <person name="Yoshida M."/>
        </authorList>
    </citation>
    <scope>SUBCELLULAR LOCATION [LARGE SCALE ANALYSIS]</scope>
</reference>
<protein>
    <recommendedName>
        <fullName evidence="2">Putative methyltransferase SPBC8D2.16c</fullName>
        <ecNumber evidence="2">2.1.1.-</ecNumber>
    </recommendedName>
</protein>
<feature type="chain" id="PRO_0000317094" description="Putative methyltransferase SPBC8D2.16c">
    <location>
        <begin position="1"/>
        <end position="315"/>
    </location>
</feature>
<dbReference type="EC" id="2.1.1.-" evidence="2"/>
<dbReference type="EMBL" id="AB004537">
    <property type="protein sequence ID" value="BAA21429.1"/>
    <property type="molecule type" value="Genomic_DNA"/>
</dbReference>
<dbReference type="EMBL" id="CU329671">
    <property type="protein sequence ID" value="CAA17831.1"/>
    <property type="molecule type" value="Genomic_DNA"/>
</dbReference>
<dbReference type="PIR" id="T40761">
    <property type="entry name" value="T40761"/>
</dbReference>
<dbReference type="RefSeq" id="NP_595578.1">
    <property type="nucleotide sequence ID" value="NM_001021473.2"/>
</dbReference>
<dbReference type="SMR" id="O13641"/>
<dbReference type="BioGRID" id="277773">
    <property type="interactions" value="12"/>
</dbReference>
<dbReference type="FunCoup" id="O13641">
    <property type="interactions" value="549"/>
</dbReference>
<dbReference type="STRING" id="284812.O13641"/>
<dbReference type="PaxDb" id="4896-SPBC8D2.16c.1"/>
<dbReference type="EnsemblFungi" id="SPBC8D2.16c.1">
    <property type="protein sequence ID" value="SPBC8D2.16c.1:pep"/>
    <property type="gene ID" value="SPBC8D2.16c"/>
</dbReference>
<dbReference type="KEGG" id="spo:2541259"/>
<dbReference type="PomBase" id="SPBC8D2.16c"/>
<dbReference type="VEuPathDB" id="FungiDB:SPBC8D2.16c"/>
<dbReference type="eggNOG" id="KOG3925">
    <property type="taxonomic scope" value="Eukaryota"/>
</dbReference>
<dbReference type="HOGENOM" id="CLU_017233_4_0_1"/>
<dbReference type="InParanoid" id="O13641"/>
<dbReference type="OMA" id="PIQPRLE"/>
<dbReference type="PhylomeDB" id="O13641"/>
<dbReference type="PRO" id="PR:O13641"/>
<dbReference type="Proteomes" id="UP000002485">
    <property type="component" value="Chromosome II"/>
</dbReference>
<dbReference type="GO" id="GO:0005829">
    <property type="term" value="C:cytosol"/>
    <property type="evidence" value="ECO:0007005"/>
    <property type="project" value="PomBase"/>
</dbReference>
<dbReference type="GO" id="GO:0005730">
    <property type="term" value="C:nucleolus"/>
    <property type="evidence" value="ECO:0000266"/>
    <property type="project" value="PomBase"/>
</dbReference>
<dbReference type="GO" id="GO:0005634">
    <property type="term" value="C:nucleus"/>
    <property type="evidence" value="ECO:0007005"/>
    <property type="project" value="PomBase"/>
</dbReference>
<dbReference type="GO" id="GO:0008173">
    <property type="term" value="F:RNA methyltransferase activity"/>
    <property type="evidence" value="ECO:0000255"/>
    <property type="project" value="PomBase"/>
</dbReference>
<dbReference type="GO" id="GO:0032259">
    <property type="term" value="P:methylation"/>
    <property type="evidence" value="ECO:0007669"/>
    <property type="project" value="UniProtKB-KW"/>
</dbReference>
<dbReference type="CDD" id="cd18086">
    <property type="entry name" value="HsC9orf114-like"/>
    <property type="match status" value="1"/>
</dbReference>
<dbReference type="FunFam" id="2.40.50.140:FF:000170">
    <property type="entry name" value="SPOUT domain containing methyltransferase 1"/>
    <property type="match status" value="1"/>
</dbReference>
<dbReference type="Gene3D" id="3.40.1280.10">
    <property type="match status" value="1"/>
</dbReference>
<dbReference type="Gene3D" id="2.40.50.140">
    <property type="entry name" value="Nucleic acid-binding proteins"/>
    <property type="match status" value="1"/>
</dbReference>
<dbReference type="InterPro" id="IPR029028">
    <property type="entry name" value="Alpha/beta_knot_MTases"/>
</dbReference>
<dbReference type="InterPro" id="IPR012340">
    <property type="entry name" value="NA-bd_OB-fold"/>
</dbReference>
<dbReference type="InterPro" id="IPR003750">
    <property type="entry name" value="Put_MeTrfase-C9orf114-like"/>
</dbReference>
<dbReference type="InterPro" id="IPR029026">
    <property type="entry name" value="tRNA_m1G_MTases_N"/>
</dbReference>
<dbReference type="PANTHER" id="PTHR12150">
    <property type="entry name" value="CLASS IV SAM-BINDING METHYLTRANSFERASE-RELATED"/>
    <property type="match status" value="1"/>
</dbReference>
<dbReference type="PANTHER" id="PTHR12150:SF13">
    <property type="entry name" value="METHYLTRANSFERASE C9ORF114-RELATED"/>
    <property type="match status" value="1"/>
</dbReference>
<dbReference type="Pfam" id="PF02598">
    <property type="entry name" value="Methyltrn_RNA_3"/>
    <property type="match status" value="1"/>
</dbReference>
<dbReference type="SUPFAM" id="SSF75217">
    <property type="entry name" value="alpha/beta knot"/>
    <property type="match status" value="1"/>
</dbReference>
<dbReference type="SUPFAM" id="SSF50249">
    <property type="entry name" value="Nucleic acid-binding proteins"/>
    <property type="match status" value="1"/>
</dbReference>
<evidence type="ECO:0000269" key="1">
    <source>
    </source>
</evidence>
<evidence type="ECO:0000305" key="2"/>
<evidence type="ECO:0000312" key="3">
    <source>
        <dbReference type="PomBase" id="SPBC8D2.16c"/>
    </source>
</evidence>
<keyword id="KW-0963">Cytoplasm</keyword>
<keyword id="KW-0489">Methyltransferase</keyword>
<keyword id="KW-0539">Nucleus</keyword>
<keyword id="KW-1185">Reference proteome</keyword>
<keyword id="KW-0808">Transferase</keyword>
<name>YGWG_SCHPO</name>
<proteinExistence type="inferred from homology"/>
<comment type="subcellular location">
    <subcellularLocation>
        <location evidence="1">Cytoplasm</location>
    </subcellularLocation>
    <subcellularLocation>
        <location evidence="1">Nucleus</location>
    </subcellularLocation>
</comment>
<comment type="similarity">
    <text evidence="2">Belongs to the class IV-like SAM-binding methyltransferase superfamily.</text>
</comment>
<sequence length="315" mass="35518">MEKESEIQSLPPTRRYTISLALPISSLNVAYNLQLKTSFVWKISRIVSLYGIDEIILLEDPEYVQNTQVHTLSSDAYLKDPTKFLTDLLCYFETPFFMRKELFPLNPHLKYTSCFPLLPLRNDKASTVNIEFPYREGIVTHPSPQAKNKYIINAGLSHNVIVSSPSVLAPRTRVTVRLKAQSPNEEGQLQGDIVSFSAPREKGGHYWGYKVRSCLSSQLCKSSPYKGGYDFVVQINSQTSAITSKELEASLPSSFRHAVLVLQDNVVQKELVDSTAKSISFNPFPVSFLNDPIPEEILLAAMTRLSDMLLMHGRR</sequence>
<organism>
    <name type="scientific">Schizosaccharomyces pombe (strain 972 / ATCC 24843)</name>
    <name type="common">Fission yeast</name>
    <dbReference type="NCBI Taxonomy" id="284812"/>
    <lineage>
        <taxon>Eukaryota</taxon>
        <taxon>Fungi</taxon>
        <taxon>Dikarya</taxon>
        <taxon>Ascomycota</taxon>
        <taxon>Taphrinomycotina</taxon>
        <taxon>Schizosaccharomycetes</taxon>
        <taxon>Schizosaccharomycetales</taxon>
        <taxon>Schizosaccharomycetaceae</taxon>
        <taxon>Schizosaccharomyces</taxon>
    </lineage>
</organism>